<sequence length="264" mass="28892">MGPKRIPLVAGNWKMNFDHLEATYFVQQLAWNLRAIHFDYKRCEIALMPSFTSLRSVQVAVESDNLKIRYGAQAVSVTSQGAFTGDVSADMIAHLGCSYVIVGHSERRKYHPEDDANIVDQVRAVLAAGMQPILCVGESYEERRKGIELDFAVGQVHDVTRDLSDEEAAKLIVAYEPVWAIGTGMVATPQSAQDAARAIRNDLSDTFGTRVGETVRILYGGSVSSKNAVELINEPDVDGFLIGGSALKVDELTRICKLTLETTA</sequence>
<name>TPIS_BIFAA</name>
<comment type="function">
    <text evidence="1">Involved in the gluconeogenesis. Catalyzes stereospecifically the conversion of dihydroxyacetone phosphate (DHAP) to D-glyceraldehyde-3-phosphate (G3P).</text>
</comment>
<comment type="catalytic activity">
    <reaction evidence="1">
        <text>D-glyceraldehyde 3-phosphate = dihydroxyacetone phosphate</text>
        <dbReference type="Rhea" id="RHEA:18585"/>
        <dbReference type="ChEBI" id="CHEBI:57642"/>
        <dbReference type="ChEBI" id="CHEBI:59776"/>
        <dbReference type="EC" id="5.3.1.1"/>
    </reaction>
</comment>
<comment type="pathway">
    <text evidence="1">Carbohydrate biosynthesis; gluconeogenesis.</text>
</comment>
<comment type="pathway">
    <text evidence="1">Carbohydrate degradation; glycolysis; D-glyceraldehyde 3-phosphate from glycerone phosphate: step 1/1.</text>
</comment>
<comment type="subunit">
    <text evidence="1">Homodimer.</text>
</comment>
<comment type="subcellular location">
    <subcellularLocation>
        <location evidence="1">Cytoplasm</location>
    </subcellularLocation>
</comment>
<comment type="similarity">
    <text evidence="1">Belongs to the triosephosphate isomerase family.</text>
</comment>
<gene>
    <name evidence="1" type="primary">tpiA</name>
    <name type="ordered locus">BAD_0834</name>
</gene>
<keyword id="KW-0963">Cytoplasm</keyword>
<keyword id="KW-0312">Gluconeogenesis</keyword>
<keyword id="KW-0324">Glycolysis</keyword>
<keyword id="KW-0413">Isomerase</keyword>
<keyword id="KW-1185">Reference proteome</keyword>
<proteinExistence type="inferred from homology"/>
<organism>
    <name type="scientific">Bifidobacterium adolescentis (strain ATCC 15703 / DSM 20083 / NCTC 11814 / E194a)</name>
    <dbReference type="NCBI Taxonomy" id="367928"/>
    <lineage>
        <taxon>Bacteria</taxon>
        <taxon>Bacillati</taxon>
        <taxon>Actinomycetota</taxon>
        <taxon>Actinomycetes</taxon>
        <taxon>Bifidobacteriales</taxon>
        <taxon>Bifidobacteriaceae</taxon>
        <taxon>Bifidobacterium</taxon>
    </lineage>
</organism>
<evidence type="ECO:0000255" key="1">
    <source>
        <dbReference type="HAMAP-Rule" id="MF_00147"/>
    </source>
</evidence>
<dbReference type="EC" id="5.3.1.1" evidence="1"/>
<dbReference type="EMBL" id="AP009256">
    <property type="protein sequence ID" value="BAF39615.1"/>
    <property type="molecule type" value="Genomic_DNA"/>
</dbReference>
<dbReference type="RefSeq" id="WP_011743203.1">
    <property type="nucleotide sequence ID" value="NZ_CAXVKE010000001.1"/>
</dbReference>
<dbReference type="SMR" id="A1A1N2"/>
<dbReference type="STRING" id="367928.BAD_0834"/>
<dbReference type="PaxDb" id="1680-BADO_0887"/>
<dbReference type="GeneID" id="4557658"/>
<dbReference type="KEGG" id="bad:BAD_0834"/>
<dbReference type="HOGENOM" id="CLU_024251_2_3_11"/>
<dbReference type="UniPathway" id="UPA00109">
    <property type="reaction ID" value="UER00189"/>
</dbReference>
<dbReference type="UniPathway" id="UPA00138"/>
<dbReference type="Proteomes" id="UP000008702">
    <property type="component" value="Chromosome"/>
</dbReference>
<dbReference type="GO" id="GO:0005829">
    <property type="term" value="C:cytosol"/>
    <property type="evidence" value="ECO:0007669"/>
    <property type="project" value="TreeGrafter"/>
</dbReference>
<dbReference type="GO" id="GO:0004807">
    <property type="term" value="F:triose-phosphate isomerase activity"/>
    <property type="evidence" value="ECO:0007669"/>
    <property type="project" value="UniProtKB-UniRule"/>
</dbReference>
<dbReference type="GO" id="GO:0006094">
    <property type="term" value="P:gluconeogenesis"/>
    <property type="evidence" value="ECO:0007669"/>
    <property type="project" value="UniProtKB-UniRule"/>
</dbReference>
<dbReference type="GO" id="GO:0046166">
    <property type="term" value="P:glyceraldehyde-3-phosphate biosynthetic process"/>
    <property type="evidence" value="ECO:0007669"/>
    <property type="project" value="TreeGrafter"/>
</dbReference>
<dbReference type="GO" id="GO:0019563">
    <property type="term" value="P:glycerol catabolic process"/>
    <property type="evidence" value="ECO:0007669"/>
    <property type="project" value="TreeGrafter"/>
</dbReference>
<dbReference type="GO" id="GO:0006096">
    <property type="term" value="P:glycolytic process"/>
    <property type="evidence" value="ECO:0007669"/>
    <property type="project" value="UniProtKB-UniRule"/>
</dbReference>
<dbReference type="CDD" id="cd00311">
    <property type="entry name" value="TIM"/>
    <property type="match status" value="1"/>
</dbReference>
<dbReference type="FunFam" id="3.20.20.70:FF:000016">
    <property type="entry name" value="Triosephosphate isomerase"/>
    <property type="match status" value="1"/>
</dbReference>
<dbReference type="Gene3D" id="3.20.20.70">
    <property type="entry name" value="Aldolase class I"/>
    <property type="match status" value="1"/>
</dbReference>
<dbReference type="HAMAP" id="MF_00147_B">
    <property type="entry name" value="TIM_B"/>
    <property type="match status" value="1"/>
</dbReference>
<dbReference type="InterPro" id="IPR013785">
    <property type="entry name" value="Aldolase_TIM"/>
</dbReference>
<dbReference type="InterPro" id="IPR035990">
    <property type="entry name" value="TIM_sf"/>
</dbReference>
<dbReference type="InterPro" id="IPR022896">
    <property type="entry name" value="TrioseP_Isoase_bac/euk"/>
</dbReference>
<dbReference type="InterPro" id="IPR000652">
    <property type="entry name" value="Triosephosphate_isomerase"/>
</dbReference>
<dbReference type="InterPro" id="IPR020861">
    <property type="entry name" value="Triosephosphate_isomerase_AS"/>
</dbReference>
<dbReference type="NCBIfam" id="TIGR00419">
    <property type="entry name" value="tim"/>
    <property type="match status" value="1"/>
</dbReference>
<dbReference type="PANTHER" id="PTHR21139">
    <property type="entry name" value="TRIOSEPHOSPHATE ISOMERASE"/>
    <property type="match status" value="1"/>
</dbReference>
<dbReference type="PANTHER" id="PTHR21139:SF42">
    <property type="entry name" value="TRIOSEPHOSPHATE ISOMERASE"/>
    <property type="match status" value="1"/>
</dbReference>
<dbReference type="Pfam" id="PF00121">
    <property type="entry name" value="TIM"/>
    <property type="match status" value="1"/>
</dbReference>
<dbReference type="SUPFAM" id="SSF51351">
    <property type="entry name" value="Triosephosphate isomerase (TIM)"/>
    <property type="match status" value="1"/>
</dbReference>
<dbReference type="PROSITE" id="PS00171">
    <property type="entry name" value="TIM_1"/>
    <property type="match status" value="1"/>
</dbReference>
<dbReference type="PROSITE" id="PS51440">
    <property type="entry name" value="TIM_2"/>
    <property type="match status" value="1"/>
</dbReference>
<reference key="1">
    <citation type="submission" date="2006-12" db="EMBL/GenBank/DDBJ databases">
        <title>Bifidobacterium adolescentis complete genome sequence.</title>
        <authorList>
            <person name="Suzuki T."/>
            <person name="Tsuda Y."/>
            <person name="Kanou N."/>
            <person name="Inoue T."/>
            <person name="Kumazaki K."/>
            <person name="Nagano S."/>
            <person name="Hirai S."/>
            <person name="Tanaka K."/>
            <person name="Watanabe K."/>
        </authorList>
    </citation>
    <scope>NUCLEOTIDE SEQUENCE [LARGE SCALE GENOMIC DNA]</scope>
    <source>
        <strain>ATCC 15703 / DSM 20083 / NCTC 11814 / E194a</strain>
    </source>
</reference>
<feature type="chain" id="PRO_0000307436" description="Triosephosphate isomerase">
    <location>
        <begin position="1"/>
        <end position="264"/>
    </location>
</feature>
<feature type="active site" description="Electrophile" evidence="1">
    <location>
        <position position="104"/>
    </location>
</feature>
<feature type="active site" description="Proton acceptor" evidence="1">
    <location>
        <position position="176"/>
    </location>
</feature>
<feature type="binding site" evidence="1">
    <location>
        <begin position="12"/>
        <end position="14"/>
    </location>
    <ligand>
        <name>substrate</name>
    </ligand>
</feature>
<feature type="binding site" evidence="1">
    <location>
        <position position="182"/>
    </location>
    <ligand>
        <name>substrate</name>
    </ligand>
</feature>
<feature type="binding site" evidence="1">
    <location>
        <position position="222"/>
    </location>
    <ligand>
        <name>substrate</name>
    </ligand>
</feature>
<feature type="binding site" evidence="1">
    <location>
        <begin position="243"/>
        <end position="244"/>
    </location>
    <ligand>
        <name>substrate</name>
    </ligand>
</feature>
<protein>
    <recommendedName>
        <fullName evidence="1">Triosephosphate isomerase</fullName>
        <shortName evidence="1">TIM</shortName>
        <shortName evidence="1">TPI</shortName>
        <ecNumber evidence="1">5.3.1.1</ecNumber>
    </recommendedName>
    <alternativeName>
        <fullName evidence="1">Triose-phosphate isomerase</fullName>
    </alternativeName>
</protein>
<accession>A1A1N2</accession>